<evidence type="ECO:0000255" key="1">
    <source>
        <dbReference type="HAMAP-Rule" id="MF_01326"/>
    </source>
</evidence>
<evidence type="ECO:0000305" key="2"/>
<proteinExistence type="inferred from homology"/>
<reference key="1">
    <citation type="submission" date="2006-12" db="EMBL/GenBank/DDBJ databases">
        <title>Complete sequence of Chlorobium phaeobacteroides DSM 266.</title>
        <authorList>
            <consortium name="US DOE Joint Genome Institute"/>
            <person name="Copeland A."/>
            <person name="Lucas S."/>
            <person name="Lapidus A."/>
            <person name="Barry K."/>
            <person name="Detter J.C."/>
            <person name="Glavina del Rio T."/>
            <person name="Hammon N."/>
            <person name="Israni S."/>
            <person name="Pitluck S."/>
            <person name="Goltsman E."/>
            <person name="Schmutz J."/>
            <person name="Larimer F."/>
            <person name="Land M."/>
            <person name="Hauser L."/>
            <person name="Mikhailova N."/>
            <person name="Li T."/>
            <person name="Overmann J."/>
            <person name="Bryant D.A."/>
            <person name="Richardson P."/>
        </authorList>
    </citation>
    <scope>NUCLEOTIDE SEQUENCE [LARGE SCALE GENOMIC DNA]</scope>
    <source>
        <strain>DSM 266 / SMG 266 / 2430</strain>
    </source>
</reference>
<comment type="function">
    <text evidence="1">One of two assembly initiator proteins, it binds directly to the 5'-end of the 23S rRNA, where it nucleates assembly of the 50S subunit.</text>
</comment>
<comment type="function">
    <text evidence="1">One of the proteins that surrounds the polypeptide exit tunnel on the outside of the subunit.</text>
</comment>
<comment type="subunit">
    <text evidence="1">Part of the 50S ribosomal subunit.</text>
</comment>
<comment type="similarity">
    <text evidence="1">Belongs to the universal ribosomal protein uL24 family.</text>
</comment>
<sequence length="80" mass="8901">MKTGIKKVKLHVKKNDMVVVISGNDKGKTGKILRVFPVKGRVIVEGVNIRKRHMKPTQGNPQGSIIEREFAIHASNVKKS</sequence>
<accession>A1BJ23</accession>
<dbReference type="EMBL" id="CP000492">
    <property type="protein sequence ID" value="ABL66400.1"/>
    <property type="molecule type" value="Genomic_DNA"/>
</dbReference>
<dbReference type="RefSeq" id="WP_011746182.1">
    <property type="nucleotide sequence ID" value="NC_008639.1"/>
</dbReference>
<dbReference type="SMR" id="A1BJ23"/>
<dbReference type="STRING" id="290317.Cpha266_2412"/>
<dbReference type="KEGG" id="cph:Cpha266_2412"/>
<dbReference type="eggNOG" id="COG0198">
    <property type="taxonomic scope" value="Bacteria"/>
</dbReference>
<dbReference type="HOGENOM" id="CLU_093315_3_0_10"/>
<dbReference type="OrthoDB" id="9807419at2"/>
<dbReference type="Proteomes" id="UP000008701">
    <property type="component" value="Chromosome"/>
</dbReference>
<dbReference type="GO" id="GO:1990904">
    <property type="term" value="C:ribonucleoprotein complex"/>
    <property type="evidence" value="ECO:0007669"/>
    <property type="project" value="UniProtKB-KW"/>
</dbReference>
<dbReference type="GO" id="GO:0005840">
    <property type="term" value="C:ribosome"/>
    <property type="evidence" value="ECO:0007669"/>
    <property type="project" value="UniProtKB-KW"/>
</dbReference>
<dbReference type="GO" id="GO:0019843">
    <property type="term" value="F:rRNA binding"/>
    <property type="evidence" value="ECO:0007669"/>
    <property type="project" value="UniProtKB-UniRule"/>
</dbReference>
<dbReference type="GO" id="GO:0003735">
    <property type="term" value="F:structural constituent of ribosome"/>
    <property type="evidence" value="ECO:0007669"/>
    <property type="project" value="InterPro"/>
</dbReference>
<dbReference type="GO" id="GO:0006412">
    <property type="term" value="P:translation"/>
    <property type="evidence" value="ECO:0007669"/>
    <property type="project" value="UniProtKB-UniRule"/>
</dbReference>
<dbReference type="CDD" id="cd06089">
    <property type="entry name" value="KOW_RPL26"/>
    <property type="match status" value="1"/>
</dbReference>
<dbReference type="Gene3D" id="2.30.30.30">
    <property type="match status" value="1"/>
</dbReference>
<dbReference type="HAMAP" id="MF_01326_B">
    <property type="entry name" value="Ribosomal_uL24_B"/>
    <property type="match status" value="1"/>
</dbReference>
<dbReference type="InterPro" id="IPR005824">
    <property type="entry name" value="KOW"/>
</dbReference>
<dbReference type="InterPro" id="IPR014722">
    <property type="entry name" value="Rib_uL2_dom2"/>
</dbReference>
<dbReference type="InterPro" id="IPR003256">
    <property type="entry name" value="Ribosomal_uL24"/>
</dbReference>
<dbReference type="InterPro" id="IPR005825">
    <property type="entry name" value="Ribosomal_uL24_CS"/>
</dbReference>
<dbReference type="InterPro" id="IPR041988">
    <property type="entry name" value="Ribosomal_uL24_KOW"/>
</dbReference>
<dbReference type="InterPro" id="IPR008991">
    <property type="entry name" value="Translation_prot_SH3-like_sf"/>
</dbReference>
<dbReference type="NCBIfam" id="TIGR01079">
    <property type="entry name" value="rplX_bact"/>
    <property type="match status" value="1"/>
</dbReference>
<dbReference type="PANTHER" id="PTHR12903">
    <property type="entry name" value="MITOCHONDRIAL RIBOSOMAL PROTEIN L24"/>
    <property type="match status" value="1"/>
</dbReference>
<dbReference type="Pfam" id="PF00467">
    <property type="entry name" value="KOW"/>
    <property type="match status" value="1"/>
</dbReference>
<dbReference type="Pfam" id="PF17136">
    <property type="entry name" value="ribosomal_L24"/>
    <property type="match status" value="1"/>
</dbReference>
<dbReference type="SMART" id="SM00739">
    <property type="entry name" value="KOW"/>
    <property type="match status" value="1"/>
</dbReference>
<dbReference type="SUPFAM" id="SSF50104">
    <property type="entry name" value="Translation proteins SH3-like domain"/>
    <property type="match status" value="1"/>
</dbReference>
<dbReference type="PROSITE" id="PS01108">
    <property type="entry name" value="RIBOSOMAL_L24"/>
    <property type="match status" value="1"/>
</dbReference>
<feature type="chain" id="PRO_0000355654" description="Large ribosomal subunit protein uL24">
    <location>
        <begin position="1"/>
        <end position="80"/>
    </location>
</feature>
<protein>
    <recommendedName>
        <fullName evidence="1">Large ribosomal subunit protein uL24</fullName>
    </recommendedName>
    <alternativeName>
        <fullName evidence="2">50S ribosomal protein L24</fullName>
    </alternativeName>
</protein>
<organism>
    <name type="scientific">Chlorobium phaeobacteroides (strain DSM 266 / SMG 266 / 2430)</name>
    <dbReference type="NCBI Taxonomy" id="290317"/>
    <lineage>
        <taxon>Bacteria</taxon>
        <taxon>Pseudomonadati</taxon>
        <taxon>Chlorobiota</taxon>
        <taxon>Chlorobiia</taxon>
        <taxon>Chlorobiales</taxon>
        <taxon>Chlorobiaceae</taxon>
        <taxon>Chlorobium/Pelodictyon group</taxon>
        <taxon>Chlorobium</taxon>
    </lineage>
</organism>
<name>RL24_CHLPD</name>
<keyword id="KW-1185">Reference proteome</keyword>
<keyword id="KW-0687">Ribonucleoprotein</keyword>
<keyword id="KW-0689">Ribosomal protein</keyword>
<keyword id="KW-0694">RNA-binding</keyword>
<keyword id="KW-0699">rRNA-binding</keyword>
<gene>
    <name evidence="1" type="primary">rplX</name>
    <name type="ordered locus">Cpha266_2412</name>
</gene>